<gene>
    <name evidence="1" type="primary">secA</name>
    <name type="ordered locus">Ent638_0644</name>
</gene>
<organism>
    <name type="scientific">Enterobacter sp. (strain 638)</name>
    <dbReference type="NCBI Taxonomy" id="399742"/>
    <lineage>
        <taxon>Bacteria</taxon>
        <taxon>Pseudomonadati</taxon>
        <taxon>Pseudomonadota</taxon>
        <taxon>Gammaproteobacteria</taxon>
        <taxon>Enterobacterales</taxon>
        <taxon>Enterobacteriaceae</taxon>
        <taxon>Enterobacter</taxon>
    </lineage>
</organism>
<feature type="chain" id="PRO_0000320800" description="Protein translocase subunit SecA">
    <location>
        <begin position="1"/>
        <end position="901"/>
    </location>
</feature>
<feature type="region of interest" description="Disordered" evidence="2">
    <location>
        <begin position="853"/>
        <end position="901"/>
    </location>
</feature>
<feature type="compositionally biased region" description="Basic residues" evidence="2">
    <location>
        <begin position="891"/>
        <end position="901"/>
    </location>
</feature>
<feature type="binding site" evidence="1">
    <location>
        <position position="87"/>
    </location>
    <ligand>
        <name>ATP</name>
        <dbReference type="ChEBI" id="CHEBI:30616"/>
    </ligand>
</feature>
<feature type="binding site" evidence="1">
    <location>
        <begin position="105"/>
        <end position="109"/>
    </location>
    <ligand>
        <name>ATP</name>
        <dbReference type="ChEBI" id="CHEBI:30616"/>
    </ligand>
</feature>
<feature type="binding site" evidence="1">
    <location>
        <position position="512"/>
    </location>
    <ligand>
        <name>ATP</name>
        <dbReference type="ChEBI" id="CHEBI:30616"/>
    </ligand>
</feature>
<feature type="binding site" evidence="1">
    <location>
        <position position="885"/>
    </location>
    <ligand>
        <name>Zn(2+)</name>
        <dbReference type="ChEBI" id="CHEBI:29105"/>
    </ligand>
</feature>
<feature type="binding site" evidence="1">
    <location>
        <position position="887"/>
    </location>
    <ligand>
        <name>Zn(2+)</name>
        <dbReference type="ChEBI" id="CHEBI:29105"/>
    </ligand>
</feature>
<feature type="binding site" evidence="1">
    <location>
        <position position="896"/>
    </location>
    <ligand>
        <name>Zn(2+)</name>
        <dbReference type="ChEBI" id="CHEBI:29105"/>
    </ligand>
</feature>
<feature type="binding site" evidence="1">
    <location>
        <position position="897"/>
    </location>
    <ligand>
        <name>Zn(2+)</name>
        <dbReference type="ChEBI" id="CHEBI:29105"/>
    </ligand>
</feature>
<proteinExistence type="inferred from homology"/>
<accession>A4W6K1</accession>
<evidence type="ECO:0000255" key="1">
    <source>
        <dbReference type="HAMAP-Rule" id="MF_01382"/>
    </source>
</evidence>
<evidence type="ECO:0000256" key="2">
    <source>
        <dbReference type="SAM" id="MobiDB-lite"/>
    </source>
</evidence>
<protein>
    <recommendedName>
        <fullName evidence="1">Protein translocase subunit SecA</fullName>
        <ecNumber evidence="1">7.4.2.8</ecNumber>
    </recommendedName>
</protein>
<comment type="function">
    <text evidence="1">Part of the Sec protein translocase complex. Interacts with the SecYEG preprotein conducting channel. Has a central role in coupling the hydrolysis of ATP to the transfer of proteins into and across the cell membrane, serving both as a receptor for the preprotein-SecB complex and as an ATP-driven molecular motor driving the stepwise translocation of polypeptide chains across the membrane.</text>
</comment>
<comment type="catalytic activity">
    <reaction evidence="1">
        <text>ATP + H2O + cellular proteinSide 1 = ADP + phosphate + cellular proteinSide 2.</text>
        <dbReference type="EC" id="7.4.2.8"/>
    </reaction>
</comment>
<comment type="cofactor">
    <cofactor evidence="1">
        <name>Zn(2+)</name>
        <dbReference type="ChEBI" id="CHEBI:29105"/>
    </cofactor>
    <text evidence="1">May bind 1 zinc ion per subunit.</text>
</comment>
<comment type="subunit">
    <text evidence="1">Monomer and homodimer. Part of the essential Sec protein translocation apparatus which comprises SecA, SecYEG and auxiliary proteins SecDF-YajC and YidC.</text>
</comment>
<comment type="subcellular location">
    <subcellularLocation>
        <location evidence="1">Cell inner membrane</location>
        <topology evidence="1">Peripheral membrane protein</topology>
        <orientation evidence="1">Cytoplasmic side</orientation>
    </subcellularLocation>
    <subcellularLocation>
        <location evidence="1">Cytoplasm</location>
    </subcellularLocation>
    <text evidence="1">Distribution is 50-50.</text>
</comment>
<comment type="induction">
    <text evidence="1">Repressed under conditions of excess protein secretion capacity and derepressed when protein secretion becomes limiting. This is regulated by SecM.</text>
</comment>
<comment type="similarity">
    <text evidence="1">Belongs to the SecA family.</text>
</comment>
<sequence>MLIKLLTKVFGSRNDRTLRRMRKAVTVINAMEPEMEKLSDDELKAKTVEFRARLDKGETVESLIPEAFAVVREASKRVFGMRHFDVQLLGGMVLNERCIAEMRTGEGKTLTATLPAYLNALSGKGVHVVTVNDYLAQRDAENNRPLFEFLGMSVGINMSGLPAPAKREAYGADITYGTNNEYGFDYLRDNMAFSPEERVQRKLHYALVDEVDSILIDEARTPLIISGPAEDSSDMYRKVDKIIPHLIRQEKEDSDTFQGEGHFSVDEKARQVNLTERGLIQIEELLVEQGIMEEGESLYSPTNIMLMHHVTAALRAHALFTRDVDYIVKDGEVIIVDEHTGRTMQGRRWSDGLHQAVEAKEGVDIQNENQTLASITFQNYFRLYEKLAGMTGTADTEAFEFSSIYKLDTVVVPTNRPMIRKDMPDLVYMTEAEKIQAIIEDIRERTAAGQPVLVGTISIEKSEVVSHELEKAGIKHNVLNAKFHAKEADIVAQAGYPAAVTIATNMAGRGTDIVLGGSWQSELAELENPTPEQIAQVKADWQVRHDAVLASGGLHIIGTERHESRRIDNQLRGRAGRQGDAGSSRFYLSMEDALMRIFASDRVSGMMRKLGMKPGEAIEHPWVTKAIANAQRKVESRNFDIRKQLLEYDDVANDQRRAIYTQRNELLDVTDVSETINSIREDVFKATIDAYIPPQSLEEMWDVEGLQERLKNDFDLELPVKEWLDKEPELHEETLRERILENAIEVYKRKEEVVGTEMMRHFEKGVMLQTLDSLWKEHLAAMDYLRQGIHLRGYAQKDPKQEYKRESFAMFATMLESLKYEVISTLGKVQVRMPEEVEAMEQQRREEAERLAQMQQLSHQTDENEAAEAIAAQTGDRKVGRNDPCPCGSGKKYKSCHGRLS</sequence>
<keyword id="KW-0067">ATP-binding</keyword>
<keyword id="KW-0997">Cell inner membrane</keyword>
<keyword id="KW-1003">Cell membrane</keyword>
<keyword id="KW-0963">Cytoplasm</keyword>
<keyword id="KW-0472">Membrane</keyword>
<keyword id="KW-0479">Metal-binding</keyword>
<keyword id="KW-0547">Nucleotide-binding</keyword>
<keyword id="KW-0653">Protein transport</keyword>
<keyword id="KW-1278">Translocase</keyword>
<keyword id="KW-0811">Translocation</keyword>
<keyword id="KW-0813">Transport</keyword>
<keyword id="KW-0862">Zinc</keyword>
<dbReference type="EC" id="7.4.2.8" evidence="1"/>
<dbReference type="EMBL" id="CP000653">
    <property type="protein sequence ID" value="ABP59331.1"/>
    <property type="molecule type" value="Genomic_DNA"/>
</dbReference>
<dbReference type="RefSeq" id="WP_012016052.1">
    <property type="nucleotide sequence ID" value="NC_009436.1"/>
</dbReference>
<dbReference type="SMR" id="A4W6K1"/>
<dbReference type="STRING" id="399742.Ent638_0644"/>
<dbReference type="KEGG" id="ent:Ent638_0644"/>
<dbReference type="eggNOG" id="COG0653">
    <property type="taxonomic scope" value="Bacteria"/>
</dbReference>
<dbReference type="HOGENOM" id="CLU_005314_3_0_6"/>
<dbReference type="OrthoDB" id="9805579at2"/>
<dbReference type="Proteomes" id="UP000000230">
    <property type="component" value="Chromosome"/>
</dbReference>
<dbReference type="GO" id="GO:0031522">
    <property type="term" value="C:cell envelope Sec protein transport complex"/>
    <property type="evidence" value="ECO:0007669"/>
    <property type="project" value="TreeGrafter"/>
</dbReference>
<dbReference type="GO" id="GO:0005829">
    <property type="term" value="C:cytosol"/>
    <property type="evidence" value="ECO:0007669"/>
    <property type="project" value="TreeGrafter"/>
</dbReference>
<dbReference type="GO" id="GO:0005886">
    <property type="term" value="C:plasma membrane"/>
    <property type="evidence" value="ECO:0007669"/>
    <property type="project" value="UniProtKB-SubCell"/>
</dbReference>
<dbReference type="GO" id="GO:0005524">
    <property type="term" value="F:ATP binding"/>
    <property type="evidence" value="ECO:0007669"/>
    <property type="project" value="UniProtKB-UniRule"/>
</dbReference>
<dbReference type="GO" id="GO:0046872">
    <property type="term" value="F:metal ion binding"/>
    <property type="evidence" value="ECO:0007669"/>
    <property type="project" value="UniProtKB-KW"/>
</dbReference>
<dbReference type="GO" id="GO:0008564">
    <property type="term" value="F:protein-exporting ATPase activity"/>
    <property type="evidence" value="ECO:0007669"/>
    <property type="project" value="UniProtKB-EC"/>
</dbReference>
<dbReference type="GO" id="GO:0065002">
    <property type="term" value="P:intracellular protein transmembrane transport"/>
    <property type="evidence" value="ECO:0007669"/>
    <property type="project" value="UniProtKB-UniRule"/>
</dbReference>
<dbReference type="GO" id="GO:0017038">
    <property type="term" value="P:protein import"/>
    <property type="evidence" value="ECO:0007669"/>
    <property type="project" value="InterPro"/>
</dbReference>
<dbReference type="GO" id="GO:0006605">
    <property type="term" value="P:protein targeting"/>
    <property type="evidence" value="ECO:0007669"/>
    <property type="project" value="UniProtKB-UniRule"/>
</dbReference>
<dbReference type="GO" id="GO:0043952">
    <property type="term" value="P:protein transport by the Sec complex"/>
    <property type="evidence" value="ECO:0007669"/>
    <property type="project" value="TreeGrafter"/>
</dbReference>
<dbReference type="CDD" id="cd17928">
    <property type="entry name" value="DEXDc_SecA"/>
    <property type="match status" value="1"/>
</dbReference>
<dbReference type="CDD" id="cd18803">
    <property type="entry name" value="SF2_C_secA"/>
    <property type="match status" value="1"/>
</dbReference>
<dbReference type="FunFam" id="1.10.3060.10:FF:000001">
    <property type="entry name" value="Preprotein translocase subunit SecA"/>
    <property type="match status" value="1"/>
</dbReference>
<dbReference type="FunFam" id="3.40.50.300:FF:000081">
    <property type="entry name" value="Preprotein translocase subunit SecA"/>
    <property type="match status" value="1"/>
</dbReference>
<dbReference type="FunFam" id="3.40.50.300:FF:000113">
    <property type="entry name" value="Preprotein translocase subunit SecA"/>
    <property type="match status" value="1"/>
</dbReference>
<dbReference type="FunFam" id="3.90.1440.10:FF:000001">
    <property type="entry name" value="Preprotein translocase subunit SecA"/>
    <property type="match status" value="1"/>
</dbReference>
<dbReference type="Gene3D" id="1.10.3060.10">
    <property type="entry name" value="Helical scaffold and wing domains of SecA"/>
    <property type="match status" value="1"/>
</dbReference>
<dbReference type="Gene3D" id="3.40.50.300">
    <property type="entry name" value="P-loop containing nucleotide triphosphate hydrolases"/>
    <property type="match status" value="2"/>
</dbReference>
<dbReference type="Gene3D" id="3.90.1440.10">
    <property type="entry name" value="SecA, preprotein cross-linking domain"/>
    <property type="match status" value="1"/>
</dbReference>
<dbReference type="HAMAP" id="MF_01382">
    <property type="entry name" value="SecA"/>
    <property type="match status" value="1"/>
</dbReference>
<dbReference type="InterPro" id="IPR014001">
    <property type="entry name" value="Helicase_ATP-bd"/>
</dbReference>
<dbReference type="InterPro" id="IPR001650">
    <property type="entry name" value="Helicase_C-like"/>
</dbReference>
<dbReference type="InterPro" id="IPR027417">
    <property type="entry name" value="P-loop_NTPase"/>
</dbReference>
<dbReference type="InterPro" id="IPR004027">
    <property type="entry name" value="SEC_C_motif"/>
</dbReference>
<dbReference type="InterPro" id="IPR000185">
    <property type="entry name" value="SecA"/>
</dbReference>
<dbReference type="InterPro" id="IPR020937">
    <property type="entry name" value="SecA_CS"/>
</dbReference>
<dbReference type="InterPro" id="IPR011115">
    <property type="entry name" value="SecA_DEAD"/>
</dbReference>
<dbReference type="InterPro" id="IPR014018">
    <property type="entry name" value="SecA_motor_DEAD"/>
</dbReference>
<dbReference type="InterPro" id="IPR011130">
    <property type="entry name" value="SecA_preprotein_X-link_dom"/>
</dbReference>
<dbReference type="InterPro" id="IPR044722">
    <property type="entry name" value="SecA_SF2_C"/>
</dbReference>
<dbReference type="InterPro" id="IPR011116">
    <property type="entry name" value="SecA_Wing/Scaffold"/>
</dbReference>
<dbReference type="InterPro" id="IPR036266">
    <property type="entry name" value="SecA_Wing/Scaffold_sf"/>
</dbReference>
<dbReference type="InterPro" id="IPR036670">
    <property type="entry name" value="SecA_X-link_sf"/>
</dbReference>
<dbReference type="NCBIfam" id="NF009538">
    <property type="entry name" value="PRK12904.1"/>
    <property type="match status" value="1"/>
</dbReference>
<dbReference type="NCBIfam" id="TIGR00963">
    <property type="entry name" value="secA"/>
    <property type="match status" value="1"/>
</dbReference>
<dbReference type="PANTHER" id="PTHR30612:SF0">
    <property type="entry name" value="CHLOROPLAST PROTEIN-TRANSPORTING ATPASE"/>
    <property type="match status" value="1"/>
</dbReference>
<dbReference type="PANTHER" id="PTHR30612">
    <property type="entry name" value="SECA INNER MEMBRANE COMPONENT OF SEC PROTEIN SECRETION SYSTEM"/>
    <property type="match status" value="1"/>
</dbReference>
<dbReference type="Pfam" id="PF21090">
    <property type="entry name" value="P-loop_SecA"/>
    <property type="match status" value="1"/>
</dbReference>
<dbReference type="Pfam" id="PF02810">
    <property type="entry name" value="SEC-C"/>
    <property type="match status" value="1"/>
</dbReference>
<dbReference type="Pfam" id="PF07517">
    <property type="entry name" value="SecA_DEAD"/>
    <property type="match status" value="1"/>
</dbReference>
<dbReference type="Pfam" id="PF01043">
    <property type="entry name" value="SecA_PP_bind"/>
    <property type="match status" value="1"/>
</dbReference>
<dbReference type="Pfam" id="PF07516">
    <property type="entry name" value="SecA_SW"/>
    <property type="match status" value="1"/>
</dbReference>
<dbReference type="PRINTS" id="PR00906">
    <property type="entry name" value="SECA"/>
</dbReference>
<dbReference type="SMART" id="SM00957">
    <property type="entry name" value="SecA_DEAD"/>
    <property type="match status" value="1"/>
</dbReference>
<dbReference type="SMART" id="SM00958">
    <property type="entry name" value="SecA_PP_bind"/>
    <property type="match status" value="1"/>
</dbReference>
<dbReference type="SUPFAM" id="SSF81886">
    <property type="entry name" value="Helical scaffold and wing domains of SecA"/>
    <property type="match status" value="1"/>
</dbReference>
<dbReference type="SUPFAM" id="SSF52540">
    <property type="entry name" value="P-loop containing nucleoside triphosphate hydrolases"/>
    <property type="match status" value="2"/>
</dbReference>
<dbReference type="SUPFAM" id="SSF81767">
    <property type="entry name" value="Pre-protein crosslinking domain of SecA"/>
    <property type="match status" value="1"/>
</dbReference>
<dbReference type="PROSITE" id="PS01312">
    <property type="entry name" value="SECA"/>
    <property type="match status" value="1"/>
</dbReference>
<dbReference type="PROSITE" id="PS51196">
    <property type="entry name" value="SECA_MOTOR_DEAD"/>
    <property type="match status" value="1"/>
</dbReference>
<reference key="1">
    <citation type="journal article" date="2010" name="PLoS Genet.">
        <title>Genome sequence of the plant growth promoting endophytic bacterium Enterobacter sp. 638.</title>
        <authorList>
            <person name="Taghavi S."/>
            <person name="van der Lelie D."/>
            <person name="Hoffman A."/>
            <person name="Zhang Y.B."/>
            <person name="Walla M.D."/>
            <person name="Vangronsveld J."/>
            <person name="Newman L."/>
            <person name="Monchy S."/>
        </authorList>
    </citation>
    <scope>NUCLEOTIDE SEQUENCE [LARGE SCALE GENOMIC DNA]</scope>
    <source>
        <strain>638</strain>
    </source>
</reference>
<name>SECA_ENT38</name>